<sequence>MDHLKRQDEKVFAAIEAELGRQRSKIELIASENFVSEAVMEAQGSVLTNKYAEGYPGKRYYGGCEHVDVVEDIARDRVKEIFGAEHVNVQPHSGAQANMAVYFTILEQGDTVLGMNLSHGGHLTHGSPVNFSGVQYNFVEYGVDAESHRINYDDVLAKAKEHKPKLIVAGASAYPRVIDFKRFREIADEVGAYLMVDMAHIAGLVAAGLHPNPVPHAHFVTTTTHKTLRGPRGGMILCEEQFAKQIDKSIFPGIQGGPLMHVIAAKAVAFGEALQDDFKTYAQNIINNANRLAEGLQKEGLTLVSGGTDNHLILIDVRNLEITGKVAEHVLDEVGITVNKNTIPFETASPFVTSGVRIGTAAVTSRGFGLEEMDEIASLIAYTLKNHENEAALEEARKRVEALTSKFPMYTDL</sequence>
<organism>
    <name type="scientific">Bacillus cereus (strain Q1)</name>
    <dbReference type="NCBI Taxonomy" id="361100"/>
    <lineage>
        <taxon>Bacteria</taxon>
        <taxon>Bacillati</taxon>
        <taxon>Bacillota</taxon>
        <taxon>Bacilli</taxon>
        <taxon>Bacillales</taxon>
        <taxon>Bacillaceae</taxon>
        <taxon>Bacillus</taxon>
        <taxon>Bacillus cereus group</taxon>
    </lineage>
</organism>
<comment type="function">
    <text evidence="1">Catalyzes the reversible interconversion of serine and glycine with tetrahydrofolate (THF) serving as the one-carbon carrier. This reaction serves as the major source of one-carbon groups required for the biosynthesis of purines, thymidylate, methionine, and other important biomolecules. Also exhibits THF-independent aldolase activity toward beta-hydroxyamino acids, producing glycine and aldehydes, via a retro-aldol mechanism.</text>
</comment>
<comment type="catalytic activity">
    <reaction evidence="1">
        <text>(6R)-5,10-methylene-5,6,7,8-tetrahydrofolate + glycine + H2O = (6S)-5,6,7,8-tetrahydrofolate + L-serine</text>
        <dbReference type="Rhea" id="RHEA:15481"/>
        <dbReference type="ChEBI" id="CHEBI:15377"/>
        <dbReference type="ChEBI" id="CHEBI:15636"/>
        <dbReference type="ChEBI" id="CHEBI:33384"/>
        <dbReference type="ChEBI" id="CHEBI:57305"/>
        <dbReference type="ChEBI" id="CHEBI:57453"/>
        <dbReference type="EC" id="2.1.2.1"/>
    </reaction>
</comment>
<comment type="cofactor">
    <cofactor evidence="1">
        <name>pyridoxal 5'-phosphate</name>
        <dbReference type="ChEBI" id="CHEBI:597326"/>
    </cofactor>
</comment>
<comment type="pathway">
    <text evidence="1">One-carbon metabolism; tetrahydrofolate interconversion.</text>
</comment>
<comment type="pathway">
    <text evidence="1">Amino-acid biosynthesis; glycine biosynthesis; glycine from L-serine: step 1/1.</text>
</comment>
<comment type="subunit">
    <text evidence="1">Homodimer.</text>
</comment>
<comment type="subcellular location">
    <subcellularLocation>
        <location evidence="1">Cytoplasm</location>
    </subcellularLocation>
</comment>
<comment type="similarity">
    <text evidence="1">Belongs to the SHMT family.</text>
</comment>
<accession>B9IRU8</accession>
<gene>
    <name evidence="1" type="primary">glyA</name>
    <name type="ordered locus">BCQ_5156</name>
</gene>
<name>GLYA_BACCQ</name>
<dbReference type="EC" id="2.1.2.1" evidence="1"/>
<dbReference type="EMBL" id="CP000227">
    <property type="protein sequence ID" value="ACM15556.1"/>
    <property type="molecule type" value="Genomic_DNA"/>
</dbReference>
<dbReference type="SMR" id="B9IRU8"/>
<dbReference type="KEGG" id="bcq:BCQ_5156"/>
<dbReference type="HOGENOM" id="CLU_022477_2_1_9"/>
<dbReference type="UniPathway" id="UPA00193"/>
<dbReference type="UniPathway" id="UPA00288">
    <property type="reaction ID" value="UER01023"/>
</dbReference>
<dbReference type="Proteomes" id="UP000000441">
    <property type="component" value="Chromosome"/>
</dbReference>
<dbReference type="GO" id="GO:0005829">
    <property type="term" value="C:cytosol"/>
    <property type="evidence" value="ECO:0007669"/>
    <property type="project" value="TreeGrafter"/>
</dbReference>
<dbReference type="GO" id="GO:0004372">
    <property type="term" value="F:glycine hydroxymethyltransferase activity"/>
    <property type="evidence" value="ECO:0007669"/>
    <property type="project" value="UniProtKB-UniRule"/>
</dbReference>
<dbReference type="GO" id="GO:0030170">
    <property type="term" value="F:pyridoxal phosphate binding"/>
    <property type="evidence" value="ECO:0007669"/>
    <property type="project" value="UniProtKB-UniRule"/>
</dbReference>
<dbReference type="GO" id="GO:0019264">
    <property type="term" value="P:glycine biosynthetic process from serine"/>
    <property type="evidence" value="ECO:0007669"/>
    <property type="project" value="UniProtKB-UniRule"/>
</dbReference>
<dbReference type="GO" id="GO:0035999">
    <property type="term" value="P:tetrahydrofolate interconversion"/>
    <property type="evidence" value="ECO:0007669"/>
    <property type="project" value="UniProtKB-UniRule"/>
</dbReference>
<dbReference type="CDD" id="cd00378">
    <property type="entry name" value="SHMT"/>
    <property type="match status" value="1"/>
</dbReference>
<dbReference type="FunFam" id="3.40.640.10:FF:000001">
    <property type="entry name" value="Serine hydroxymethyltransferase"/>
    <property type="match status" value="1"/>
</dbReference>
<dbReference type="FunFam" id="3.90.1150.10:FF:000003">
    <property type="entry name" value="Serine hydroxymethyltransferase"/>
    <property type="match status" value="1"/>
</dbReference>
<dbReference type="Gene3D" id="3.90.1150.10">
    <property type="entry name" value="Aspartate Aminotransferase, domain 1"/>
    <property type="match status" value="1"/>
</dbReference>
<dbReference type="Gene3D" id="3.40.640.10">
    <property type="entry name" value="Type I PLP-dependent aspartate aminotransferase-like (Major domain)"/>
    <property type="match status" value="1"/>
</dbReference>
<dbReference type="HAMAP" id="MF_00051">
    <property type="entry name" value="SHMT"/>
    <property type="match status" value="1"/>
</dbReference>
<dbReference type="InterPro" id="IPR015424">
    <property type="entry name" value="PyrdxlP-dep_Trfase"/>
</dbReference>
<dbReference type="InterPro" id="IPR015421">
    <property type="entry name" value="PyrdxlP-dep_Trfase_major"/>
</dbReference>
<dbReference type="InterPro" id="IPR015422">
    <property type="entry name" value="PyrdxlP-dep_Trfase_small"/>
</dbReference>
<dbReference type="InterPro" id="IPR001085">
    <property type="entry name" value="Ser_HO-MeTrfase"/>
</dbReference>
<dbReference type="InterPro" id="IPR049943">
    <property type="entry name" value="Ser_HO-MeTrfase-like"/>
</dbReference>
<dbReference type="InterPro" id="IPR019798">
    <property type="entry name" value="Ser_HO-MeTrfase_PLP_BS"/>
</dbReference>
<dbReference type="InterPro" id="IPR039429">
    <property type="entry name" value="SHMT-like_dom"/>
</dbReference>
<dbReference type="NCBIfam" id="NF000586">
    <property type="entry name" value="PRK00011.1"/>
    <property type="match status" value="1"/>
</dbReference>
<dbReference type="PANTHER" id="PTHR11680">
    <property type="entry name" value="SERINE HYDROXYMETHYLTRANSFERASE"/>
    <property type="match status" value="1"/>
</dbReference>
<dbReference type="PANTHER" id="PTHR11680:SF35">
    <property type="entry name" value="SERINE HYDROXYMETHYLTRANSFERASE 1"/>
    <property type="match status" value="1"/>
</dbReference>
<dbReference type="Pfam" id="PF00464">
    <property type="entry name" value="SHMT"/>
    <property type="match status" value="1"/>
</dbReference>
<dbReference type="PIRSF" id="PIRSF000412">
    <property type="entry name" value="SHMT"/>
    <property type="match status" value="1"/>
</dbReference>
<dbReference type="SUPFAM" id="SSF53383">
    <property type="entry name" value="PLP-dependent transferases"/>
    <property type="match status" value="1"/>
</dbReference>
<dbReference type="PROSITE" id="PS00096">
    <property type="entry name" value="SHMT"/>
    <property type="match status" value="1"/>
</dbReference>
<reference key="1">
    <citation type="journal article" date="2009" name="J. Bacteriol.">
        <title>Complete genome sequence of the extremophilic Bacillus cereus strain Q1 with industrial applications.</title>
        <authorList>
            <person name="Xiong Z."/>
            <person name="Jiang Y."/>
            <person name="Qi D."/>
            <person name="Lu H."/>
            <person name="Yang F."/>
            <person name="Yang J."/>
            <person name="Chen L."/>
            <person name="Sun L."/>
            <person name="Xu X."/>
            <person name="Xue Y."/>
            <person name="Zhu Y."/>
            <person name="Jin Q."/>
        </authorList>
    </citation>
    <scope>NUCLEOTIDE SEQUENCE [LARGE SCALE GENOMIC DNA]</scope>
    <source>
        <strain>Q1</strain>
    </source>
</reference>
<protein>
    <recommendedName>
        <fullName evidence="1">Serine hydroxymethyltransferase</fullName>
        <shortName evidence="1">SHMT</shortName>
        <shortName evidence="1">Serine methylase</shortName>
        <ecNumber evidence="1">2.1.2.1</ecNumber>
    </recommendedName>
</protein>
<feature type="chain" id="PRO_1000195432" description="Serine hydroxymethyltransferase">
    <location>
        <begin position="1"/>
        <end position="413"/>
    </location>
</feature>
<feature type="binding site" evidence="1">
    <location>
        <position position="117"/>
    </location>
    <ligand>
        <name>(6S)-5,6,7,8-tetrahydrofolate</name>
        <dbReference type="ChEBI" id="CHEBI:57453"/>
    </ligand>
</feature>
<feature type="binding site" evidence="1">
    <location>
        <begin position="121"/>
        <end position="123"/>
    </location>
    <ligand>
        <name>(6S)-5,6,7,8-tetrahydrofolate</name>
        <dbReference type="ChEBI" id="CHEBI:57453"/>
    </ligand>
</feature>
<feature type="binding site" evidence="1">
    <location>
        <position position="239"/>
    </location>
    <ligand>
        <name>(6S)-5,6,7,8-tetrahydrofolate</name>
        <dbReference type="ChEBI" id="CHEBI:57453"/>
    </ligand>
</feature>
<feature type="binding site" evidence="1">
    <location>
        <begin position="349"/>
        <end position="351"/>
    </location>
    <ligand>
        <name>(6S)-5,6,7,8-tetrahydrofolate</name>
        <dbReference type="ChEBI" id="CHEBI:57453"/>
    </ligand>
</feature>
<feature type="site" description="Plays an important role in substrate specificity" evidence="1">
    <location>
        <position position="225"/>
    </location>
</feature>
<feature type="modified residue" description="N6-(pyridoxal phosphate)lysine" evidence="1">
    <location>
        <position position="226"/>
    </location>
</feature>
<keyword id="KW-0028">Amino-acid biosynthesis</keyword>
<keyword id="KW-0963">Cytoplasm</keyword>
<keyword id="KW-0554">One-carbon metabolism</keyword>
<keyword id="KW-0663">Pyridoxal phosphate</keyword>
<keyword id="KW-0808">Transferase</keyword>
<proteinExistence type="inferred from homology"/>
<evidence type="ECO:0000255" key="1">
    <source>
        <dbReference type="HAMAP-Rule" id="MF_00051"/>
    </source>
</evidence>